<reference key="1">
    <citation type="submission" date="2004-11" db="EMBL/GenBank/DDBJ databases">
        <authorList>
            <consortium name="The German cDNA consortium"/>
        </authorList>
    </citation>
    <scope>NUCLEOTIDE SEQUENCE [LARGE SCALE MRNA] (ISOFORMS 1 AND 2)</scope>
    <source>
        <tissue>Brain cortex</tissue>
    </source>
</reference>
<dbReference type="EC" id="7.2.2.13"/>
<dbReference type="EMBL" id="CR857839">
    <property type="protein sequence ID" value="CAH90094.1"/>
    <property type="molecule type" value="mRNA"/>
</dbReference>
<dbReference type="EMBL" id="CR858508">
    <property type="protein sequence ID" value="CAH90736.1"/>
    <property type="molecule type" value="mRNA"/>
</dbReference>
<dbReference type="RefSeq" id="NP_001127327.1">
    <property type="nucleotide sequence ID" value="NM_001133855.1"/>
</dbReference>
<dbReference type="SMR" id="Q5RDR3"/>
<dbReference type="FunCoup" id="Q5RDR3">
    <property type="interactions" value="1984"/>
</dbReference>
<dbReference type="GeneID" id="100174388"/>
<dbReference type="KEGG" id="pon:100174388"/>
<dbReference type="CTD" id="476"/>
<dbReference type="InParanoid" id="Q5RDR3"/>
<dbReference type="OrthoDB" id="3352408at2759"/>
<dbReference type="Proteomes" id="UP000001595">
    <property type="component" value="Unplaced"/>
</dbReference>
<dbReference type="GO" id="GO:0030424">
    <property type="term" value="C:axon"/>
    <property type="evidence" value="ECO:0007669"/>
    <property type="project" value="UniProtKB-SubCell"/>
</dbReference>
<dbReference type="GO" id="GO:0016323">
    <property type="term" value="C:basolateral plasma membrane"/>
    <property type="evidence" value="ECO:0000250"/>
    <property type="project" value="UniProtKB"/>
</dbReference>
<dbReference type="GO" id="GO:0042470">
    <property type="term" value="C:melanosome"/>
    <property type="evidence" value="ECO:0007669"/>
    <property type="project" value="UniProtKB-SubCell"/>
</dbReference>
<dbReference type="GO" id="GO:0016020">
    <property type="term" value="C:membrane"/>
    <property type="evidence" value="ECO:0000250"/>
    <property type="project" value="UniProtKB"/>
</dbReference>
<dbReference type="GO" id="GO:0005886">
    <property type="term" value="C:plasma membrane"/>
    <property type="evidence" value="ECO:0000250"/>
    <property type="project" value="UniProtKB"/>
</dbReference>
<dbReference type="GO" id="GO:0042383">
    <property type="term" value="C:sarcolemma"/>
    <property type="evidence" value="ECO:0007669"/>
    <property type="project" value="UniProtKB-SubCell"/>
</dbReference>
<dbReference type="GO" id="GO:0005890">
    <property type="term" value="C:sodium:potassium-exchanging ATPase complex"/>
    <property type="evidence" value="ECO:0007669"/>
    <property type="project" value="TreeGrafter"/>
</dbReference>
<dbReference type="GO" id="GO:0005524">
    <property type="term" value="F:ATP binding"/>
    <property type="evidence" value="ECO:0007669"/>
    <property type="project" value="UniProtKB-KW"/>
</dbReference>
<dbReference type="GO" id="GO:0016887">
    <property type="term" value="F:ATP hydrolysis activity"/>
    <property type="evidence" value="ECO:0007669"/>
    <property type="project" value="InterPro"/>
</dbReference>
<dbReference type="GO" id="GO:0046872">
    <property type="term" value="F:metal ion binding"/>
    <property type="evidence" value="ECO:0007669"/>
    <property type="project" value="UniProtKB-KW"/>
</dbReference>
<dbReference type="GO" id="GO:0005391">
    <property type="term" value="F:P-type sodium:potassium-exchanging transporter activity"/>
    <property type="evidence" value="ECO:0000250"/>
    <property type="project" value="UniProtKB"/>
</dbReference>
<dbReference type="GO" id="GO:0030007">
    <property type="term" value="P:intracellular potassium ion homeostasis"/>
    <property type="evidence" value="ECO:0007669"/>
    <property type="project" value="TreeGrafter"/>
</dbReference>
<dbReference type="GO" id="GO:0006883">
    <property type="term" value="P:intracellular sodium ion homeostasis"/>
    <property type="evidence" value="ECO:0007669"/>
    <property type="project" value="TreeGrafter"/>
</dbReference>
<dbReference type="GO" id="GO:1990573">
    <property type="term" value="P:potassium ion import across plasma membrane"/>
    <property type="evidence" value="ECO:0007669"/>
    <property type="project" value="TreeGrafter"/>
</dbReference>
<dbReference type="GO" id="GO:1902600">
    <property type="term" value="P:proton transmembrane transport"/>
    <property type="evidence" value="ECO:0007669"/>
    <property type="project" value="TreeGrafter"/>
</dbReference>
<dbReference type="GO" id="GO:0002028">
    <property type="term" value="P:regulation of sodium ion transport"/>
    <property type="evidence" value="ECO:0000250"/>
    <property type="project" value="UniProtKB"/>
</dbReference>
<dbReference type="GO" id="GO:0036376">
    <property type="term" value="P:sodium ion export across plasma membrane"/>
    <property type="evidence" value="ECO:0007669"/>
    <property type="project" value="TreeGrafter"/>
</dbReference>
<dbReference type="CDD" id="cd02608">
    <property type="entry name" value="P-type_ATPase_Na-K_like"/>
    <property type="match status" value="1"/>
</dbReference>
<dbReference type="FunFam" id="1.20.1110.10:FF:000163">
    <property type="match status" value="1"/>
</dbReference>
<dbReference type="FunFam" id="2.70.150.10:FF:000106">
    <property type="entry name" value="Sodium/potassium-transporting ATPase subunit alpha"/>
    <property type="match status" value="1"/>
</dbReference>
<dbReference type="FunFam" id="3.40.1110.10:FF:000001">
    <property type="entry name" value="Sodium/potassium-transporting ATPase subunit alpha"/>
    <property type="match status" value="1"/>
</dbReference>
<dbReference type="FunFam" id="3.40.50.1000:FF:000004">
    <property type="entry name" value="Sodium/potassium-transporting ATPase subunit alpha"/>
    <property type="match status" value="1"/>
</dbReference>
<dbReference type="FunFam" id="1.20.1110.10:FF:000095">
    <property type="entry name" value="Sodium/potassium-transporting ATPase subunit alpha-1"/>
    <property type="match status" value="2"/>
</dbReference>
<dbReference type="Gene3D" id="3.40.1110.10">
    <property type="entry name" value="Calcium-transporting ATPase, cytoplasmic domain N"/>
    <property type="match status" value="1"/>
</dbReference>
<dbReference type="Gene3D" id="2.70.150.10">
    <property type="entry name" value="Calcium-transporting ATPase, cytoplasmic transduction domain A"/>
    <property type="match status" value="1"/>
</dbReference>
<dbReference type="Gene3D" id="1.20.1110.10">
    <property type="entry name" value="Calcium-transporting ATPase, transmembrane domain"/>
    <property type="match status" value="1"/>
</dbReference>
<dbReference type="Gene3D" id="3.40.50.1000">
    <property type="entry name" value="HAD superfamily/HAD-like"/>
    <property type="match status" value="1"/>
</dbReference>
<dbReference type="InterPro" id="IPR006068">
    <property type="entry name" value="ATPase_P-typ_cation-transptr_C"/>
</dbReference>
<dbReference type="InterPro" id="IPR004014">
    <property type="entry name" value="ATPase_P-typ_cation-transptr_N"/>
</dbReference>
<dbReference type="InterPro" id="IPR023299">
    <property type="entry name" value="ATPase_P-typ_cyto_dom_N"/>
</dbReference>
<dbReference type="InterPro" id="IPR018303">
    <property type="entry name" value="ATPase_P-typ_P_site"/>
</dbReference>
<dbReference type="InterPro" id="IPR023298">
    <property type="entry name" value="ATPase_P-typ_TM_dom_sf"/>
</dbReference>
<dbReference type="InterPro" id="IPR008250">
    <property type="entry name" value="ATPase_P-typ_transduc_dom_A_sf"/>
</dbReference>
<dbReference type="InterPro" id="IPR050510">
    <property type="entry name" value="Cation_transp_ATPase_P-type"/>
</dbReference>
<dbReference type="InterPro" id="IPR036412">
    <property type="entry name" value="HAD-like_sf"/>
</dbReference>
<dbReference type="InterPro" id="IPR023214">
    <property type="entry name" value="HAD_sf"/>
</dbReference>
<dbReference type="InterPro" id="IPR005775">
    <property type="entry name" value="P-type_ATPase_IIC"/>
</dbReference>
<dbReference type="InterPro" id="IPR001757">
    <property type="entry name" value="P_typ_ATPase"/>
</dbReference>
<dbReference type="InterPro" id="IPR044492">
    <property type="entry name" value="P_typ_ATPase_HD_dom"/>
</dbReference>
<dbReference type="NCBIfam" id="TIGR01106">
    <property type="entry name" value="ATPase-IIC_X-K"/>
    <property type="match status" value="1"/>
</dbReference>
<dbReference type="NCBIfam" id="TIGR01494">
    <property type="entry name" value="ATPase_P-type"/>
    <property type="match status" value="2"/>
</dbReference>
<dbReference type="PANTHER" id="PTHR43294">
    <property type="entry name" value="SODIUM/POTASSIUM-TRANSPORTING ATPASE SUBUNIT ALPHA"/>
    <property type="match status" value="1"/>
</dbReference>
<dbReference type="PANTHER" id="PTHR43294:SF9">
    <property type="entry name" value="SODIUM_POTASSIUM-TRANSPORTING ATPASE SUBUNIT ALPHA-1"/>
    <property type="match status" value="1"/>
</dbReference>
<dbReference type="Pfam" id="PF13246">
    <property type="entry name" value="Cation_ATPase"/>
    <property type="match status" value="1"/>
</dbReference>
<dbReference type="Pfam" id="PF00689">
    <property type="entry name" value="Cation_ATPase_C"/>
    <property type="match status" value="1"/>
</dbReference>
<dbReference type="Pfam" id="PF00690">
    <property type="entry name" value="Cation_ATPase_N"/>
    <property type="match status" value="1"/>
</dbReference>
<dbReference type="Pfam" id="PF00122">
    <property type="entry name" value="E1-E2_ATPase"/>
    <property type="match status" value="1"/>
</dbReference>
<dbReference type="PRINTS" id="PR00119">
    <property type="entry name" value="CATATPASE"/>
</dbReference>
<dbReference type="PRINTS" id="PR00121">
    <property type="entry name" value="NAKATPASE"/>
</dbReference>
<dbReference type="SFLD" id="SFLDG00002">
    <property type="entry name" value="C1.7:_P-type_atpase_like"/>
    <property type="match status" value="1"/>
</dbReference>
<dbReference type="SFLD" id="SFLDF00027">
    <property type="entry name" value="p-type_atpase"/>
    <property type="match status" value="1"/>
</dbReference>
<dbReference type="SMART" id="SM00831">
    <property type="entry name" value="Cation_ATPase_N"/>
    <property type="match status" value="1"/>
</dbReference>
<dbReference type="SUPFAM" id="SSF81653">
    <property type="entry name" value="Calcium ATPase, transduction domain A"/>
    <property type="match status" value="1"/>
</dbReference>
<dbReference type="SUPFAM" id="SSF81665">
    <property type="entry name" value="Calcium ATPase, transmembrane domain M"/>
    <property type="match status" value="1"/>
</dbReference>
<dbReference type="SUPFAM" id="SSF56784">
    <property type="entry name" value="HAD-like"/>
    <property type="match status" value="1"/>
</dbReference>
<dbReference type="SUPFAM" id="SSF81660">
    <property type="entry name" value="Metal cation-transporting ATPase, ATP-binding domain N"/>
    <property type="match status" value="1"/>
</dbReference>
<dbReference type="PROSITE" id="PS00154">
    <property type="entry name" value="ATPASE_E1_E2"/>
    <property type="match status" value="1"/>
</dbReference>
<evidence type="ECO:0000250" key="1"/>
<evidence type="ECO:0000250" key="2">
    <source>
        <dbReference type="UniProtKB" id="P05023"/>
    </source>
</evidence>
<evidence type="ECO:0000250" key="3">
    <source>
        <dbReference type="UniProtKB" id="P06685"/>
    </source>
</evidence>
<evidence type="ECO:0000250" key="4">
    <source>
        <dbReference type="UniProtKB" id="Q8VDN2"/>
    </source>
</evidence>
<evidence type="ECO:0000255" key="5"/>
<evidence type="ECO:0000256" key="6">
    <source>
        <dbReference type="SAM" id="MobiDB-lite"/>
    </source>
</evidence>
<evidence type="ECO:0000303" key="7">
    <source ref="1"/>
</evidence>
<evidence type="ECO:0000305" key="8"/>
<sequence length="1023" mass="112940">MAFKVGRDKYEPAAVSEQGDKKGKKGKKDRDMDELKKEVSMDDHKLSLDELHRKYGTDLSRGLTSARAAEILARDGPNALTPPPTTPEWIKFCRQLFGGFSMLLWIGAILCFLAYSIQAATEEEPQNDNLYLGVVLSAVVIITGCFSYYQEAKSSKIMESFKNMVPQQALVIRNGEKMSINAEEVVVGDLVEVKGGDRIPADLRIISANGCKVDNSSLTGESEPQTRSPDFTNENPLETRNIAFFSTNCVEGTARGIVVYTGDRTVMGRIATLASGLEGGQTPIAAEIEHFIHIITGVAVFLGVSFFILSLILEYTWLEAVIFLIGIIVANVPEGLLATVTVCLTLTAKRMARKNCLVKNLEAVETLGSTSTICSDKTGTLTQNRMTVAHMWFDNQIHEAGTTENQSGVSFDKTSATWLALSRIAGLCNRAVFQANQENLPILKRAVAGDASESALLKCIELCCGSVKEMRERYAKIVEIPFNSTNKYQLSIHKNPNTSEPRHLLVMKGAPERILDRCSSILLHGKEQPLDEELKDAFQNAYLELGGLGERVLGFCHLFLPDEQFPEGFQFDTDDVNFPIDNLCFVGLISMIDPPRAAVPDAVGKCRSAGIKVIMVTGDHPITAKAIAKGVGIISEGNETVEDIAARLNIPVSQVNPRDAKACVVHGSDLKDMTSEQLDDILKYHTEIVFARTSPQQKLIIVEGCQRQGAIVAVTGDGVNDSPALKKADIGVAMGIAGSDVSKQAADMILLDDNFASIVTGVEEGRLIFDNLKKSIAYTLTSNIPEITPFLIFIIANIPLPLGTVTILCIDLGTDMVPAISLAYEQAESDIMKRQPRNPKTDKLVNERLISTAYGQIGMIQALGGFFTYFVILAENGFLPLHLLGLRVDWDDRWINDVEDSYGQQWTYEQRKIVEFTCHTAFFVSIVVVQWADLVICKTRRNSVFQQGMKNKILIFGLFEETALAAFLSYCPGMGVALRMYPLKPTWWFCAFPYSLLIFVYDEVRKLIIRRRPGGWVEKETYY</sequence>
<feature type="propeptide" id="PRO_0000305977" evidence="1">
    <location>
        <begin position="1"/>
        <end position="5"/>
    </location>
</feature>
<feature type="chain" id="PRO_0000305978" description="Sodium/potassium-transporting ATPase subunit alpha-1" evidence="1">
    <location>
        <begin position="6"/>
        <end position="1023"/>
    </location>
</feature>
<feature type="topological domain" description="Cytoplasmic" evidence="5">
    <location>
        <begin position="6"/>
        <end position="87"/>
    </location>
</feature>
<feature type="transmembrane region" description="Helical" evidence="5">
    <location>
        <begin position="88"/>
        <end position="108"/>
    </location>
</feature>
<feature type="topological domain" description="Extracellular" evidence="5">
    <location>
        <begin position="109"/>
        <end position="131"/>
    </location>
</feature>
<feature type="transmembrane region" description="Helical" evidence="5">
    <location>
        <begin position="132"/>
        <end position="152"/>
    </location>
</feature>
<feature type="topological domain" description="Cytoplasmic" evidence="5">
    <location>
        <begin position="153"/>
        <end position="288"/>
    </location>
</feature>
<feature type="transmembrane region" description="Helical" evidence="5">
    <location>
        <begin position="289"/>
        <end position="308"/>
    </location>
</feature>
<feature type="topological domain" description="Extracellular" evidence="5">
    <location>
        <begin position="309"/>
        <end position="320"/>
    </location>
</feature>
<feature type="transmembrane region" description="Helical" evidence="5">
    <location>
        <begin position="321"/>
        <end position="338"/>
    </location>
</feature>
<feature type="topological domain" description="Cytoplasmic" evidence="5">
    <location>
        <begin position="339"/>
        <end position="772"/>
    </location>
</feature>
<feature type="transmembrane region" description="Helical" evidence="5">
    <location>
        <begin position="773"/>
        <end position="792"/>
    </location>
</feature>
<feature type="topological domain" description="Extracellular" evidence="5">
    <location>
        <begin position="793"/>
        <end position="802"/>
    </location>
</feature>
<feature type="transmembrane region" description="Helical" evidence="5">
    <location>
        <begin position="803"/>
        <end position="823"/>
    </location>
</feature>
<feature type="topological domain" description="Cytoplasmic" evidence="5">
    <location>
        <begin position="824"/>
        <end position="843"/>
    </location>
</feature>
<feature type="transmembrane region" description="Helical" evidence="5">
    <location>
        <begin position="844"/>
        <end position="866"/>
    </location>
</feature>
<feature type="topological domain" description="Extracellular" evidence="5">
    <location>
        <begin position="867"/>
        <end position="918"/>
    </location>
</feature>
<feature type="transmembrane region" description="Helical" evidence="5">
    <location>
        <begin position="919"/>
        <end position="938"/>
    </location>
</feature>
<feature type="topological domain" description="Cytoplasmic" evidence="5">
    <location>
        <begin position="939"/>
        <end position="951"/>
    </location>
</feature>
<feature type="transmembrane region" description="Helical" evidence="5">
    <location>
        <begin position="952"/>
        <end position="970"/>
    </location>
</feature>
<feature type="topological domain" description="Extracellular" evidence="5">
    <location>
        <begin position="971"/>
        <end position="985"/>
    </location>
</feature>
<feature type="transmembrane region" description="Helical" evidence="5">
    <location>
        <begin position="986"/>
        <end position="1006"/>
    </location>
</feature>
<feature type="topological domain" description="Cytoplasmic" evidence="5">
    <location>
        <begin position="1007"/>
        <end position="1023"/>
    </location>
</feature>
<feature type="region of interest" description="Disordered" evidence="6">
    <location>
        <begin position="1"/>
        <end position="38"/>
    </location>
</feature>
<feature type="region of interest" description="Phosphoinositide-3 kinase binding" evidence="1">
    <location>
        <begin position="82"/>
        <end position="84"/>
    </location>
</feature>
<feature type="region of interest" description="Disordered" evidence="6">
    <location>
        <begin position="216"/>
        <end position="235"/>
    </location>
</feature>
<feature type="region of interest" description="Mediates interaction with SCN7A" evidence="4">
    <location>
        <begin position="596"/>
        <end position="717"/>
    </location>
</feature>
<feature type="compositionally biased region" description="Basic and acidic residues" evidence="6">
    <location>
        <begin position="1"/>
        <end position="11"/>
    </location>
</feature>
<feature type="compositionally biased region" description="Basic and acidic residues" evidence="6">
    <location>
        <begin position="28"/>
        <end position="38"/>
    </location>
</feature>
<feature type="active site" description="4-aspartylphosphate intermediate" evidence="1">
    <location>
        <position position="376"/>
    </location>
</feature>
<feature type="binding site" evidence="1">
    <location>
        <position position="487"/>
    </location>
    <ligand>
        <name>ATP</name>
        <dbReference type="ChEBI" id="CHEBI:30616"/>
    </ligand>
</feature>
<feature type="binding site" evidence="1">
    <location>
        <position position="717"/>
    </location>
    <ligand>
        <name>Mg(2+)</name>
        <dbReference type="ChEBI" id="CHEBI:18420"/>
    </ligand>
</feature>
<feature type="binding site" evidence="1">
    <location>
        <position position="721"/>
    </location>
    <ligand>
        <name>Mg(2+)</name>
        <dbReference type="ChEBI" id="CHEBI:18420"/>
    </ligand>
</feature>
<feature type="modified residue" description="N6-acetyllysine" evidence="4">
    <location>
        <position position="9"/>
    </location>
</feature>
<feature type="modified residue" description="Phosphotyrosine" evidence="3">
    <location>
        <position position="10"/>
    </location>
</feature>
<feature type="modified residue" description="Phosphoserine; by PKC" evidence="3">
    <location>
        <position position="16"/>
    </location>
</feature>
<feature type="modified residue" description="N6-acetyllysine" evidence="4">
    <location>
        <position position="21"/>
    </location>
</feature>
<feature type="modified residue" description="Phosphoserine" evidence="3">
    <location>
        <position position="40"/>
    </location>
</feature>
<feature type="modified residue" description="Phosphoserine" evidence="3">
    <location>
        <position position="47"/>
    </location>
</feature>
<feature type="modified residue" description="Phosphoserine" evidence="4">
    <location>
        <position position="228"/>
    </location>
</feature>
<feature type="modified residue" description="Phosphotyrosine" evidence="4">
    <location>
        <position position="260"/>
    </location>
</feature>
<feature type="modified residue" description="Phosphoserine" evidence="3">
    <location>
        <position position="452"/>
    </location>
</feature>
<feature type="modified residue" description="Phosphoserine" evidence="3">
    <location>
        <position position="484"/>
    </location>
</feature>
<feature type="modified residue" description="Phosphotyrosine" evidence="2">
    <location>
        <position position="542"/>
    </location>
</feature>
<feature type="modified residue" description="N6-succinyllysine" evidence="4">
    <location>
        <position position="661"/>
    </location>
</feature>
<feature type="modified residue" description="Phosphoserine" evidence="4">
    <location>
        <position position="668"/>
    </location>
</feature>
<feature type="modified residue" description="Phosphoserine" evidence="4">
    <location>
        <position position="675"/>
    </location>
</feature>
<feature type="modified residue" description="Phosphoserine; by PKA" evidence="3">
    <location>
        <position position="943"/>
    </location>
</feature>
<feature type="splice variant" id="VSP_028390" description="In isoform 2." evidence="7">
    <location>
        <begin position="1"/>
        <end position="31"/>
    </location>
</feature>
<feature type="sequence conflict" description="In Ref. 1; CAH90736." evidence="8" ref="1">
    <original>G</original>
    <variation>D</variation>
    <location>
        <position position="401"/>
    </location>
</feature>
<feature type="sequence conflict" description="In Ref. 1; CAH90736." evidence="8" ref="1">
    <original>Q</original>
    <variation>R</variation>
    <location>
        <position position="489"/>
    </location>
</feature>
<feature type="sequence conflict" description="In Ref. 1; CAH90736." evidence="8" ref="1">
    <original>N</original>
    <variation>S</variation>
    <location>
        <position position="649"/>
    </location>
</feature>
<feature type="sequence conflict" description="In Ref. 1; CAH90736." evidence="8" ref="1">
    <original>I</original>
    <variation>V</variation>
    <location>
        <position position="820"/>
    </location>
</feature>
<feature type="sequence conflict" description="In Ref. 1; CAH90736." evidence="8" ref="1">
    <original>T</original>
    <variation>M</variation>
    <location>
        <position position="852"/>
    </location>
</feature>
<comment type="function">
    <text evidence="2 4">This is the catalytic component of the active enzyme, which catalyzes the hydrolysis of ATP coupled with the exchange of sodium and potassium ions across the plasma membrane. This action creates the electrochemical gradient of sodium and potassium ions, providing the energy for active transport of various nutrients (By similarity). Could also be part of an osmosensory signaling pathway that senses body-fluid sodium levels and controls salt intake behavior as well as voluntary water intake to regulate sodium homeostasis (By similarity).</text>
</comment>
<comment type="catalytic activity">
    <reaction>
        <text>K(+)(out) + Na(+)(in) + ATP + H2O = K(+)(in) + Na(+)(out) + ADP + phosphate + H(+)</text>
        <dbReference type="Rhea" id="RHEA:18353"/>
        <dbReference type="ChEBI" id="CHEBI:15377"/>
        <dbReference type="ChEBI" id="CHEBI:15378"/>
        <dbReference type="ChEBI" id="CHEBI:29101"/>
        <dbReference type="ChEBI" id="CHEBI:29103"/>
        <dbReference type="ChEBI" id="CHEBI:30616"/>
        <dbReference type="ChEBI" id="CHEBI:43474"/>
        <dbReference type="ChEBI" id="CHEBI:456216"/>
        <dbReference type="EC" id="7.2.2.13"/>
    </reaction>
</comment>
<comment type="subunit">
    <text evidence="2 3 4">The sodium/potassium-transporting ATPase is composed of a catalytic alpha subunit, an auxiliary non-catalytic beta subunit and an additional regulatory subunit. Interacts with regulatory subunit FXYD1. Interacts with regulatory subunit FXYD3. Interacts with SIK1. Interacts with SLC35G1 and STIM1. Interacts with CLN3; this interaction regulates the sodium/potassium-transporting ATPase complex localization at the plasma membrane (By similarity). Interacts with SCN7A; activates ATP1A1 P-type sodium:potassium-exchanging transporter activity which indirectly signals to nearby neurons to regulate sodium homeostasis (By similarity).</text>
</comment>
<comment type="subcellular location">
    <subcellularLocation>
        <location evidence="4">Cell membrane</location>
        <topology evidence="5">Multi-pass membrane protein</topology>
    </subcellularLocation>
    <subcellularLocation>
        <location evidence="3">Basolateral cell membrane</location>
        <topology evidence="5">Multi-pass membrane protein</topology>
    </subcellularLocation>
    <subcellularLocation>
        <location evidence="2">Cell membrane</location>
        <location evidence="2">Sarcolemma</location>
        <topology evidence="5">Multi-pass membrane protein</topology>
    </subcellularLocation>
    <subcellularLocation>
        <location evidence="3">Cell projection</location>
        <location evidence="3">Axon</location>
    </subcellularLocation>
    <subcellularLocation>
        <location evidence="2">Melanosome</location>
    </subcellularLocation>
</comment>
<comment type="alternative products">
    <event type="alternative splicing"/>
    <isoform>
        <id>Q5RDR3-1</id>
        <name>1</name>
        <sequence type="displayed"/>
    </isoform>
    <isoform>
        <id>Q5RDR3-2</id>
        <name>2</name>
        <sequence type="described" ref="VSP_028390"/>
    </isoform>
</comment>
<comment type="PTM">
    <text evidence="1">Phosphorylation on Tyr-10 modulates pumping activity. Phosphorylation of Ser-943 by PKA modulates the response of ATP1A1 to PKC. Dephosphorylation by protein phosphatase 2A (PP2A) following increases in intracellular sodium, leading to increase catalytic activity (By similarity).</text>
</comment>
<comment type="similarity">
    <text evidence="8">Belongs to the cation transport ATPase (P-type) (TC 3.A.3) family. Type IIC subfamily.</text>
</comment>
<protein>
    <recommendedName>
        <fullName>Sodium/potassium-transporting ATPase subunit alpha-1</fullName>
        <shortName>Na(+)/K(+) ATPase alpha-1 subunit</shortName>
        <ecNumber>7.2.2.13</ecNumber>
    </recommendedName>
    <alternativeName>
        <fullName>Sodium pump subunit alpha-1</fullName>
    </alternativeName>
</protein>
<proteinExistence type="evidence at transcript level"/>
<keyword id="KW-0007">Acetylation</keyword>
<keyword id="KW-0025">Alternative splicing</keyword>
<keyword id="KW-0067">ATP-binding</keyword>
<keyword id="KW-1003">Cell membrane</keyword>
<keyword id="KW-0966">Cell projection</keyword>
<keyword id="KW-0406">Ion transport</keyword>
<keyword id="KW-0460">Magnesium</keyword>
<keyword id="KW-0472">Membrane</keyword>
<keyword id="KW-0479">Metal-binding</keyword>
<keyword id="KW-0547">Nucleotide-binding</keyword>
<keyword id="KW-0597">Phosphoprotein</keyword>
<keyword id="KW-0630">Potassium</keyword>
<keyword id="KW-0633">Potassium transport</keyword>
<keyword id="KW-1185">Reference proteome</keyword>
<keyword id="KW-0915">Sodium</keyword>
<keyword id="KW-0739">Sodium transport</keyword>
<keyword id="KW-0740">Sodium/potassium transport</keyword>
<keyword id="KW-1278">Translocase</keyword>
<keyword id="KW-0812">Transmembrane</keyword>
<keyword id="KW-1133">Transmembrane helix</keyword>
<keyword id="KW-0813">Transport</keyword>
<gene>
    <name type="primary">ATP1A1</name>
</gene>
<organism>
    <name type="scientific">Pongo abelii</name>
    <name type="common">Sumatran orangutan</name>
    <name type="synonym">Pongo pygmaeus abelii</name>
    <dbReference type="NCBI Taxonomy" id="9601"/>
    <lineage>
        <taxon>Eukaryota</taxon>
        <taxon>Metazoa</taxon>
        <taxon>Chordata</taxon>
        <taxon>Craniata</taxon>
        <taxon>Vertebrata</taxon>
        <taxon>Euteleostomi</taxon>
        <taxon>Mammalia</taxon>
        <taxon>Eutheria</taxon>
        <taxon>Euarchontoglires</taxon>
        <taxon>Primates</taxon>
        <taxon>Haplorrhini</taxon>
        <taxon>Catarrhini</taxon>
        <taxon>Hominidae</taxon>
        <taxon>Pongo</taxon>
    </lineage>
</organism>
<accession>Q5RDR3</accession>
<accession>Q5RBX4</accession>
<name>AT1A1_PONAB</name>